<accession>B2UYB7</accession>
<organism>
    <name type="scientific">Clostridium botulinum (strain Alaska E43 / Type E3)</name>
    <dbReference type="NCBI Taxonomy" id="508767"/>
    <lineage>
        <taxon>Bacteria</taxon>
        <taxon>Bacillati</taxon>
        <taxon>Bacillota</taxon>
        <taxon>Clostridia</taxon>
        <taxon>Eubacteriales</taxon>
        <taxon>Clostridiaceae</taxon>
        <taxon>Clostridium</taxon>
    </lineage>
</organism>
<proteinExistence type="inferred from homology"/>
<keyword id="KW-0687">Ribonucleoprotein</keyword>
<keyword id="KW-0689">Ribosomal protein</keyword>
<keyword id="KW-0694">RNA-binding</keyword>
<keyword id="KW-0699">rRNA-binding</keyword>
<keyword id="KW-0820">tRNA-binding</keyword>
<reference key="1">
    <citation type="submission" date="2008-05" db="EMBL/GenBank/DDBJ databases">
        <title>Complete genome sequence of Clostridium botulinum E3 str. Alaska E43.</title>
        <authorList>
            <person name="Brinkac L.M."/>
            <person name="Brown J.L."/>
            <person name="Bruce D."/>
            <person name="Detter C."/>
            <person name="Munk C."/>
            <person name="Smith L.A."/>
            <person name="Smith T.J."/>
            <person name="Sutton G."/>
            <person name="Brettin T.S."/>
        </authorList>
    </citation>
    <scope>NUCLEOTIDE SEQUENCE [LARGE SCALE GENOMIC DNA]</scope>
    <source>
        <strain>Alaska E43 / Type E3</strain>
    </source>
</reference>
<comment type="function">
    <text evidence="1">Binds 23S rRNA and is also seen to make contacts with the A and possibly P site tRNAs.</text>
</comment>
<comment type="subunit">
    <text evidence="1">Part of the 50S ribosomal subunit.</text>
</comment>
<comment type="similarity">
    <text evidence="1">Belongs to the universal ribosomal protein uL16 family.</text>
</comment>
<protein>
    <recommendedName>
        <fullName evidence="1">Large ribosomal subunit protein uL16</fullName>
    </recommendedName>
    <alternativeName>
        <fullName evidence="2">50S ribosomal protein L16</fullName>
    </alternativeName>
</protein>
<name>RL16_CLOBA</name>
<feature type="chain" id="PRO_1000142947" description="Large ribosomal subunit protein uL16">
    <location>
        <begin position="1"/>
        <end position="144"/>
    </location>
</feature>
<sequence length="144" mass="16380">MLMPKRVKHRKVQRGRMKGRATRGNFLAYGDFGLQATTCGWITSNQIEAARIAINRYIKRGGKLWIKIFPDKPVTEKPAETRMGSGKGSPEYWVAVVKPDRVVFELSGVTEDVAREAMRLASHKLPVRTKFVTRRDFEEMGGEK</sequence>
<dbReference type="EMBL" id="CP001078">
    <property type="protein sequence ID" value="ACD51478.1"/>
    <property type="molecule type" value="Genomic_DNA"/>
</dbReference>
<dbReference type="RefSeq" id="WP_003372978.1">
    <property type="nucleotide sequence ID" value="NC_010723.1"/>
</dbReference>
<dbReference type="SMR" id="B2UYB7"/>
<dbReference type="KEGG" id="cbt:CLH_0244"/>
<dbReference type="HOGENOM" id="CLU_078858_2_1_9"/>
<dbReference type="GO" id="GO:0022625">
    <property type="term" value="C:cytosolic large ribosomal subunit"/>
    <property type="evidence" value="ECO:0007669"/>
    <property type="project" value="TreeGrafter"/>
</dbReference>
<dbReference type="GO" id="GO:0019843">
    <property type="term" value="F:rRNA binding"/>
    <property type="evidence" value="ECO:0007669"/>
    <property type="project" value="UniProtKB-UniRule"/>
</dbReference>
<dbReference type="GO" id="GO:0003735">
    <property type="term" value="F:structural constituent of ribosome"/>
    <property type="evidence" value="ECO:0007669"/>
    <property type="project" value="InterPro"/>
</dbReference>
<dbReference type="GO" id="GO:0000049">
    <property type="term" value="F:tRNA binding"/>
    <property type="evidence" value="ECO:0007669"/>
    <property type="project" value="UniProtKB-KW"/>
</dbReference>
<dbReference type="GO" id="GO:0006412">
    <property type="term" value="P:translation"/>
    <property type="evidence" value="ECO:0007669"/>
    <property type="project" value="UniProtKB-UniRule"/>
</dbReference>
<dbReference type="CDD" id="cd01433">
    <property type="entry name" value="Ribosomal_L16_L10e"/>
    <property type="match status" value="1"/>
</dbReference>
<dbReference type="FunFam" id="3.90.1170.10:FF:000001">
    <property type="entry name" value="50S ribosomal protein L16"/>
    <property type="match status" value="1"/>
</dbReference>
<dbReference type="Gene3D" id="3.90.1170.10">
    <property type="entry name" value="Ribosomal protein L10e/L16"/>
    <property type="match status" value="1"/>
</dbReference>
<dbReference type="HAMAP" id="MF_01342">
    <property type="entry name" value="Ribosomal_uL16"/>
    <property type="match status" value="1"/>
</dbReference>
<dbReference type="InterPro" id="IPR047873">
    <property type="entry name" value="Ribosomal_uL16"/>
</dbReference>
<dbReference type="InterPro" id="IPR000114">
    <property type="entry name" value="Ribosomal_uL16_bact-type"/>
</dbReference>
<dbReference type="InterPro" id="IPR020798">
    <property type="entry name" value="Ribosomal_uL16_CS"/>
</dbReference>
<dbReference type="InterPro" id="IPR016180">
    <property type="entry name" value="Ribosomal_uL16_dom"/>
</dbReference>
<dbReference type="InterPro" id="IPR036920">
    <property type="entry name" value="Ribosomal_uL16_sf"/>
</dbReference>
<dbReference type="NCBIfam" id="TIGR01164">
    <property type="entry name" value="rplP_bact"/>
    <property type="match status" value="1"/>
</dbReference>
<dbReference type="PANTHER" id="PTHR12220">
    <property type="entry name" value="50S/60S RIBOSOMAL PROTEIN L16"/>
    <property type="match status" value="1"/>
</dbReference>
<dbReference type="PANTHER" id="PTHR12220:SF13">
    <property type="entry name" value="LARGE RIBOSOMAL SUBUNIT PROTEIN UL16M"/>
    <property type="match status" value="1"/>
</dbReference>
<dbReference type="Pfam" id="PF00252">
    <property type="entry name" value="Ribosomal_L16"/>
    <property type="match status" value="1"/>
</dbReference>
<dbReference type="PRINTS" id="PR00060">
    <property type="entry name" value="RIBOSOMALL16"/>
</dbReference>
<dbReference type="SUPFAM" id="SSF54686">
    <property type="entry name" value="Ribosomal protein L16p/L10e"/>
    <property type="match status" value="1"/>
</dbReference>
<dbReference type="PROSITE" id="PS00586">
    <property type="entry name" value="RIBOSOMAL_L16_1"/>
    <property type="match status" value="1"/>
</dbReference>
<dbReference type="PROSITE" id="PS00701">
    <property type="entry name" value="RIBOSOMAL_L16_2"/>
    <property type="match status" value="1"/>
</dbReference>
<gene>
    <name evidence="1" type="primary">rplP</name>
    <name type="ordered locus">CLH_0244</name>
</gene>
<evidence type="ECO:0000255" key="1">
    <source>
        <dbReference type="HAMAP-Rule" id="MF_01342"/>
    </source>
</evidence>
<evidence type="ECO:0000305" key="2"/>